<feature type="chain" id="PRO_1000019829" description="Serine--tRNA ligase">
    <location>
        <begin position="1"/>
        <end position="428"/>
    </location>
</feature>
<feature type="binding site" evidence="1">
    <location>
        <begin position="231"/>
        <end position="233"/>
    </location>
    <ligand>
        <name>L-serine</name>
        <dbReference type="ChEBI" id="CHEBI:33384"/>
    </ligand>
</feature>
<feature type="binding site" evidence="1">
    <location>
        <begin position="262"/>
        <end position="264"/>
    </location>
    <ligand>
        <name>ATP</name>
        <dbReference type="ChEBI" id="CHEBI:30616"/>
    </ligand>
</feature>
<feature type="binding site" evidence="1">
    <location>
        <position position="285"/>
    </location>
    <ligand>
        <name>L-serine</name>
        <dbReference type="ChEBI" id="CHEBI:33384"/>
    </ligand>
</feature>
<feature type="binding site" evidence="1">
    <location>
        <begin position="349"/>
        <end position="352"/>
    </location>
    <ligand>
        <name>ATP</name>
        <dbReference type="ChEBI" id="CHEBI:30616"/>
    </ligand>
</feature>
<feature type="binding site" evidence="1">
    <location>
        <position position="385"/>
    </location>
    <ligand>
        <name>L-serine</name>
        <dbReference type="ChEBI" id="CHEBI:33384"/>
    </ligand>
</feature>
<sequence>MLDIRLFRNEPDTVKSKIELRGDDPKVVDEILELDEQRRKLISATEEMKARRNKVSEEIALKKRNKENADDVIAEMRTLGDDIKEKDSQLNEIDNKMTGILCRIPNLISDDVPQGESDEDNVEVKKWGTPREFSFEPKAHWDIVEELKMADFDRAAKVSGARFVYLTNEGAQLERALMNYMITKHTTQHGYTEMMVPQLVNADTMYGTGQLPKFEEDLFKVEKEGLYTIPTAEVPLTNFYRNEIIQPGVLPEKFTGQSACFRSEAGSAGRDTRGLIRLHQFDKVEMVRFEQPEDSWNALEEMTTNAEAILEELGLPYRRVILCTGDIGFSASKTYDIEVWLPSYNDYKEISSCSNCTDFQARRANIRFKRDKAAKPELAHTLNGSGLAVGRTFAAIVENYQNEDGTVTIPEALVPFMGGKTQISKPVK</sequence>
<proteinExistence type="inferred from homology"/>
<dbReference type="EC" id="6.1.1.11" evidence="1"/>
<dbReference type="EMBL" id="AP009324">
    <property type="protein sequence ID" value="BAF76892.1"/>
    <property type="molecule type" value="Genomic_DNA"/>
</dbReference>
<dbReference type="RefSeq" id="WP_000884332.1">
    <property type="nucleotide sequence ID" value="NC_009782.1"/>
</dbReference>
<dbReference type="SMR" id="A7WWP0"/>
<dbReference type="KEGG" id="saw:SAHV_0009"/>
<dbReference type="HOGENOM" id="CLU_023797_1_1_9"/>
<dbReference type="UniPathway" id="UPA00906">
    <property type="reaction ID" value="UER00895"/>
</dbReference>
<dbReference type="GO" id="GO:0005737">
    <property type="term" value="C:cytoplasm"/>
    <property type="evidence" value="ECO:0007669"/>
    <property type="project" value="UniProtKB-SubCell"/>
</dbReference>
<dbReference type="GO" id="GO:0005524">
    <property type="term" value="F:ATP binding"/>
    <property type="evidence" value="ECO:0007669"/>
    <property type="project" value="UniProtKB-UniRule"/>
</dbReference>
<dbReference type="GO" id="GO:0140096">
    <property type="term" value="F:catalytic activity, acting on a protein"/>
    <property type="evidence" value="ECO:0007669"/>
    <property type="project" value="UniProtKB-ARBA"/>
</dbReference>
<dbReference type="GO" id="GO:0004828">
    <property type="term" value="F:serine-tRNA ligase activity"/>
    <property type="evidence" value="ECO:0007669"/>
    <property type="project" value="UniProtKB-UniRule"/>
</dbReference>
<dbReference type="GO" id="GO:0016740">
    <property type="term" value="F:transferase activity"/>
    <property type="evidence" value="ECO:0007669"/>
    <property type="project" value="UniProtKB-ARBA"/>
</dbReference>
<dbReference type="GO" id="GO:0016260">
    <property type="term" value="P:selenocysteine biosynthetic process"/>
    <property type="evidence" value="ECO:0007669"/>
    <property type="project" value="UniProtKB-UniRule"/>
</dbReference>
<dbReference type="GO" id="GO:0006434">
    <property type="term" value="P:seryl-tRNA aminoacylation"/>
    <property type="evidence" value="ECO:0007669"/>
    <property type="project" value="UniProtKB-UniRule"/>
</dbReference>
<dbReference type="CDD" id="cd00770">
    <property type="entry name" value="SerRS_core"/>
    <property type="match status" value="1"/>
</dbReference>
<dbReference type="Gene3D" id="3.30.930.10">
    <property type="entry name" value="Bira Bifunctional Protein, Domain 2"/>
    <property type="match status" value="1"/>
</dbReference>
<dbReference type="Gene3D" id="1.10.287.40">
    <property type="entry name" value="Serine-tRNA synthetase, tRNA binding domain"/>
    <property type="match status" value="1"/>
</dbReference>
<dbReference type="HAMAP" id="MF_00176">
    <property type="entry name" value="Ser_tRNA_synth_type1"/>
    <property type="match status" value="1"/>
</dbReference>
<dbReference type="InterPro" id="IPR002314">
    <property type="entry name" value="aa-tRNA-synt_IIb"/>
</dbReference>
<dbReference type="InterPro" id="IPR006195">
    <property type="entry name" value="aa-tRNA-synth_II"/>
</dbReference>
<dbReference type="InterPro" id="IPR045864">
    <property type="entry name" value="aa-tRNA-synth_II/BPL/LPL"/>
</dbReference>
<dbReference type="InterPro" id="IPR002317">
    <property type="entry name" value="Ser-tRNA-ligase_type_1"/>
</dbReference>
<dbReference type="InterPro" id="IPR015866">
    <property type="entry name" value="Ser-tRNA-synth_1_N"/>
</dbReference>
<dbReference type="InterPro" id="IPR042103">
    <property type="entry name" value="SerRS_1_N_sf"/>
</dbReference>
<dbReference type="InterPro" id="IPR033729">
    <property type="entry name" value="SerRS_core"/>
</dbReference>
<dbReference type="InterPro" id="IPR010978">
    <property type="entry name" value="tRNA-bd_arm"/>
</dbReference>
<dbReference type="NCBIfam" id="TIGR00414">
    <property type="entry name" value="serS"/>
    <property type="match status" value="1"/>
</dbReference>
<dbReference type="PANTHER" id="PTHR43697:SF1">
    <property type="entry name" value="SERINE--TRNA LIGASE"/>
    <property type="match status" value="1"/>
</dbReference>
<dbReference type="PANTHER" id="PTHR43697">
    <property type="entry name" value="SERYL-TRNA SYNTHETASE"/>
    <property type="match status" value="1"/>
</dbReference>
<dbReference type="Pfam" id="PF02403">
    <property type="entry name" value="Seryl_tRNA_N"/>
    <property type="match status" value="1"/>
</dbReference>
<dbReference type="Pfam" id="PF00587">
    <property type="entry name" value="tRNA-synt_2b"/>
    <property type="match status" value="1"/>
</dbReference>
<dbReference type="PIRSF" id="PIRSF001529">
    <property type="entry name" value="Ser-tRNA-synth_IIa"/>
    <property type="match status" value="1"/>
</dbReference>
<dbReference type="PRINTS" id="PR00981">
    <property type="entry name" value="TRNASYNTHSER"/>
</dbReference>
<dbReference type="SUPFAM" id="SSF55681">
    <property type="entry name" value="Class II aaRS and biotin synthetases"/>
    <property type="match status" value="1"/>
</dbReference>
<dbReference type="SUPFAM" id="SSF46589">
    <property type="entry name" value="tRNA-binding arm"/>
    <property type="match status" value="1"/>
</dbReference>
<dbReference type="PROSITE" id="PS50862">
    <property type="entry name" value="AA_TRNA_LIGASE_II"/>
    <property type="match status" value="1"/>
</dbReference>
<comment type="function">
    <text evidence="1">Catalyzes the attachment of serine to tRNA(Ser). Is also able to aminoacylate tRNA(Sec) with serine, to form the misacylated tRNA L-seryl-tRNA(Sec), which will be further converted into selenocysteinyl-tRNA(Sec).</text>
</comment>
<comment type="catalytic activity">
    <reaction evidence="1">
        <text>tRNA(Ser) + L-serine + ATP = L-seryl-tRNA(Ser) + AMP + diphosphate + H(+)</text>
        <dbReference type="Rhea" id="RHEA:12292"/>
        <dbReference type="Rhea" id="RHEA-COMP:9669"/>
        <dbReference type="Rhea" id="RHEA-COMP:9703"/>
        <dbReference type="ChEBI" id="CHEBI:15378"/>
        <dbReference type="ChEBI" id="CHEBI:30616"/>
        <dbReference type="ChEBI" id="CHEBI:33019"/>
        <dbReference type="ChEBI" id="CHEBI:33384"/>
        <dbReference type="ChEBI" id="CHEBI:78442"/>
        <dbReference type="ChEBI" id="CHEBI:78533"/>
        <dbReference type="ChEBI" id="CHEBI:456215"/>
        <dbReference type="EC" id="6.1.1.11"/>
    </reaction>
</comment>
<comment type="catalytic activity">
    <reaction evidence="1">
        <text>tRNA(Sec) + L-serine + ATP = L-seryl-tRNA(Sec) + AMP + diphosphate + H(+)</text>
        <dbReference type="Rhea" id="RHEA:42580"/>
        <dbReference type="Rhea" id="RHEA-COMP:9742"/>
        <dbReference type="Rhea" id="RHEA-COMP:10128"/>
        <dbReference type="ChEBI" id="CHEBI:15378"/>
        <dbReference type="ChEBI" id="CHEBI:30616"/>
        <dbReference type="ChEBI" id="CHEBI:33019"/>
        <dbReference type="ChEBI" id="CHEBI:33384"/>
        <dbReference type="ChEBI" id="CHEBI:78442"/>
        <dbReference type="ChEBI" id="CHEBI:78533"/>
        <dbReference type="ChEBI" id="CHEBI:456215"/>
        <dbReference type="EC" id="6.1.1.11"/>
    </reaction>
</comment>
<comment type="pathway">
    <text evidence="1">Aminoacyl-tRNA biosynthesis; selenocysteinyl-tRNA(Sec) biosynthesis; L-seryl-tRNA(Sec) from L-serine and tRNA(Sec): step 1/1.</text>
</comment>
<comment type="subunit">
    <text evidence="1">Homodimer. The tRNA molecule binds across the dimer.</text>
</comment>
<comment type="subcellular location">
    <subcellularLocation>
        <location evidence="1">Cytoplasm</location>
    </subcellularLocation>
</comment>
<comment type="domain">
    <text evidence="1">Consists of two distinct domains, a catalytic core and a N-terminal extension that is involved in tRNA binding.</text>
</comment>
<comment type="similarity">
    <text evidence="1">Belongs to the class-II aminoacyl-tRNA synthetase family. Type-1 seryl-tRNA synthetase subfamily.</text>
</comment>
<name>SYS_STAA1</name>
<gene>
    <name evidence="1" type="primary">serS</name>
    <name type="ordered locus">SAHV_0009</name>
</gene>
<accession>A7WWP0</accession>
<protein>
    <recommendedName>
        <fullName evidence="1">Serine--tRNA ligase</fullName>
        <ecNumber evidence="1">6.1.1.11</ecNumber>
    </recommendedName>
    <alternativeName>
        <fullName evidence="1">Seryl-tRNA synthetase</fullName>
        <shortName evidence="1">SerRS</shortName>
    </alternativeName>
    <alternativeName>
        <fullName evidence="1">Seryl-tRNA(Ser/Sec) synthetase</fullName>
    </alternativeName>
</protein>
<organism>
    <name type="scientific">Staphylococcus aureus (strain Mu3 / ATCC 700698)</name>
    <dbReference type="NCBI Taxonomy" id="418127"/>
    <lineage>
        <taxon>Bacteria</taxon>
        <taxon>Bacillati</taxon>
        <taxon>Bacillota</taxon>
        <taxon>Bacilli</taxon>
        <taxon>Bacillales</taxon>
        <taxon>Staphylococcaceae</taxon>
        <taxon>Staphylococcus</taxon>
    </lineage>
</organism>
<keyword id="KW-0030">Aminoacyl-tRNA synthetase</keyword>
<keyword id="KW-0067">ATP-binding</keyword>
<keyword id="KW-0963">Cytoplasm</keyword>
<keyword id="KW-0436">Ligase</keyword>
<keyword id="KW-0547">Nucleotide-binding</keyword>
<keyword id="KW-0648">Protein biosynthesis</keyword>
<reference key="1">
    <citation type="journal article" date="2008" name="Antimicrob. Agents Chemother.">
        <title>Mutated response regulator graR is responsible for phenotypic conversion of Staphylococcus aureus from heterogeneous vancomycin-intermediate resistance to vancomycin-intermediate resistance.</title>
        <authorList>
            <person name="Neoh H.-M."/>
            <person name="Cui L."/>
            <person name="Yuzawa H."/>
            <person name="Takeuchi F."/>
            <person name="Matsuo M."/>
            <person name="Hiramatsu K."/>
        </authorList>
    </citation>
    <scope>NUCLEOTIDE SEQUENCE [LARGE SCALE GENOMIC DNA]</scope>
    <source>
        <strain>Mu3 / ATCC 700698</strain>
    </source>
</reference>
<evidence type="ECO:0000255" key="1">
    <source>
        <dbReference type="HAMAP-Rule" id="MF_00176"/>
    </source>
</evidence>